<proteinExistence type="evidence at protein level"/>
<comment type="function">
    <text evidence="5">May act as an RNA-binding protein.</text>
</comment>
<comment type="disruption phenotype">
    <text evidence="3">Sensitive to various stresses including heat, sodium dodecyl sulfate and calcineurin inhibitor tacrolimus (PubMed:27611567). Resistant to tunicamycin-induced ER stress (PubMed:27611567). Simultaneous disruption of CRZ1 enhances thermosensitivity and decreases virulence in a mouse intranasal inhalation model for pulmonary infection (PubMed:27611567).</text>
</comment>
<name>LARP1_CRYNH</name>
<protein>
    <recommendedName>
        <fullName evidence="5">La RNA-binding domain-containing protein LHP1</fullName>
    </recommendedName>
</protein>
<sequence length="895" mass="93777">MSPSQQQTSVFNALGSYADRIKDANGNFIKSSPSSSSSATPEPTSLSSSTSGKKAFSTATSKSGQQKQGSSPQPGAITAEDDGPWETVQSTRARQRTDRSEEKEKRGSSSKNWRERSHRDEKNQDDGEKRNGRERSKKEKGDKSNSAPFVGSATSSEKTAKSLSSSTKNAWGVTSSSQGENPIASNPGPKQKAQNDSTFRSSSAAAPVGPTTSTINEIIKQSEGSDEDNWRARPAKVEKNEKTEGPVSITQAQPQPQRQLAPPPSVNIWDLRKKMSVPVLVSPTSATSAVAGIPPKSDKEKSLTNGMVKEEDSGTGKSLSKKKSAAAAAAAGTSSTPPSIHDATLWPDIIQAAEVVKAGEDKKEKAKERLNSESASVAEESTIGIGKKPKWTPIPAHELLAAADHAAEQSRRQNRMEAKKRSSGREGGESGPTGSGAPGKSNKTRKGMPAAEGKKARKEGAQQKDGHASSKAGETIGAGTGKANGDVKETKEGDARSASQQESSSHRSGPSISASANTGIDSSLHARTKSTPNASTTPLPPHTFNLASSSNLPRSTRGRGEGRGSFGGGRARGGFRSSGALGHKGQLGHGYGHVHGQGQGFGYGYGSPPMGVAGLPVEGIIYAPLNPGAGAGAGASPNLYQRGYGMGFQPFYPAATAAASAGEGGPTGAAAGDAAGVYDPAAAVYGNMGMYKSASMPPPPMPQTVVPNLDPLRFYVLGQVEYYFSMQNLAMDFFLRQQMDSEGWIDIAMIASFNRIKSLTPETSIVRECMILSNYLEVREDKVRLSGAESHRWVLPDAAPSKFGPDPRSPSLAEGAESSEERDGAASGSQSGLVTAGEEGAQGLQASPRRMFGAQDVKDALMKSSALSTVNGEIKEKEEVKAMENEGEESENYEQ</sequence>
<accession>J9VT60</accession>
<reference evidence="7" key="1">
    <citation type="journal article" date="2014" name="PLoS Genet.">
        <title>Analysis of the genome and transcriptome of Cryptococcus neoformans var. grubii reveals complex RNA expression and microevolution leading to virulence attenuation.</title>
        <authorList>
            <person name="Janbon G."/>
            <person name="Ormerod K.L."/>
            <person name="Paulet D."/>
            <person name="Byrnes E.J. III"/>
            <person name="Yadav V."/>
            <person name="Chatterjee G."/>
            <person name="Mullapudi N."/>
            <person name="Hon C.-C."/>
            <person name="Billmyre R.B."/>
            <person name="Brunel F."/>
            <person name="Bahn Y.-S."/>
            <person name="Chen W."/>
            <person name="Chen Y."/>
            <person name="Chow E.W.L."/>
            <person name="Coppee J.-Y."/>
            <person name="Floyd-Averette A."/>
            <person name="Gaillardin C."/>
            <person name="Gerik K.J."/>
            <person name="Goldberg J."/>
            <person name="Gonzalez-Hilarion S."/>
            <person name="Gujja S."/>
            <person name="Hamlin J.L."/>
            <person name="Hsueh Y.-P."/>
            <person name="Ianiri G."/>
            <person name="Jones S."/>
            <person name="Kodira C.D."/>
            <person name="Kozubowski L."/>
            <person name="Lam W."/>
            <person name="Marra M."/>
            <person name="Mesner L.D."/>
            <person name="Mieczkowski P.A."/>
            <person name="Moyrand F."/>
            <person name="Nielsen K."/>
            <person name="Proux C."/>
            <person name="Rossignol T."/>
            <person name="Schein J.E."/>
            <person name="Sun S."/>
            <person name="Wollschlaeger C."/>
            <person name="Wood I.A."/>
            <person name="Zeng Q."/>
            <person name="Neuveglise C."/>
            <person name="Newlon C.S."/>
            <person name="Perfect J.R."/>
            <person name="Lodge J.K."/>
            <person name="Idnurm A."/>
            <person name="Stajich J.E."/>
            <person name="Kronstad J.W."/>
            <person name="Sanyal K."/>
            <person name="Heitman J."/>
            <person name="Fraser J.A."/>
            <person name="Cuomo C.A."/>
            <person name="Dietrich F.S."/>
        </authorList>
    </citation>
    <scope>NUCLEOTIDE SEQUENCE [LARGE SCALE GENOMIC DNA]</scope>
    <source>
        <strain>H99 / ATCC 208821 / CBS 10515 / FGSC 9487</strain>
    </source>
</reference>
<reference evidence="5" key="2">
    <citation type="journal article" date="2016" name="PLoS Pathog.">
        <title>Calcineurin Targets Involved in Stress Survival and Fungal Virulence.</title>
        <authorList>
            <person name="Park H.S."/>
            <person name="Chow E.W."/>
            <person name="Fu C."/>
            <person name="Soderblom E.J."/>
            <person name="Moseley M.A."/>
            <person name="Heitman J."/>
            <person name="Cardenas M.E."/>
        </authorList>
    </citation>
    <scope>IDENTIFICATION BY MASS SPECTROMETRY</scope>
    <scope>DISRUPTION PHENOTYPE</scope>
    <scope>PHOSPHORYLATION AT SER-847</scope>
</reference>
<feature type="chain" id="PRO_0000451160" description="La RNA-binding domain-containing protein LHP1">
    <location>
        <begin position="1"/>
        <end position="895"/>
    </location>
</feature>
<feature type="domain" description="HTH La-type RNA-binding" evidence="1">
    <location>
        <begin position="706"/>
        <end position="796"/>
    </location>
</feature>
<feature type="region of interest" description="Disordered" evidence="2">
    <location>
        <begin position="24"/>
        <end position="265"/>
    </location>
</feature>
<feature type="region of interest" description="Disordered" evidence="2">
    <location>
        <begin position="285"/>
        <end position="344"/>
    </location>
</feature>
<feature type="region of interest" description="Disordered" evidence="2">
    <location>
        <begin position="359"/>
        <end position="590"/>
    </location>
</feature>
<feature type="region of interest" description="Disordered" evidence="2">
    <location>
        <begin position="796"/>
        <end position="857"/>
    </location>
</feature>
<feature type="region of interest" description="Disordered" evidence="2">
    <location>
        <begin position="870"/>
        <end position="895"/>
    </location>
</feature>
<feature type="compositionally biased region" description="Low complexity" evidence="2">
    <location>
        <begin position="31"/>
        <end position="75"/>
    </location>
</feature>
<feature type="compositionally biased region" description="Basic and acidic residues" evidence="2">
    <location>
        <begin position="95"/>
        <end position="143"/>
    </location>
</feature>
<feature type="compositionally biased region" description="Low complexity" evidence="2">
    <location>
        <begin position="152"/>
        <end position="170"/>
    </location>
</feature>
<feature type="compositionally biased region" description="Polar residues" evidence="2">
    <location>
        <begin position="172"/>
        <end position="184"/>
    </location>
</feature>
<feature type="compositionally biased region" description="Polar residues" evidence="2">
    <location>
        <begin position="192"/>
        <end position="216"/>
    </location>
</feature>
<feature type="compositionally biased region" description="Basic and acidic residues" evidence="2">
    <location>
        <begin position="228"/>
        <end position="244"/>
    </location>
</feature>
<feature type="compositionally biased region" description="Low complexity" evidence="2">
    <location>
        <begin position="251"/>
        <end position="260"/>
    </location>
</feature>
<feature type="compositionally biased region" description="Basic and acidic residues" evidence="2">
    <location>
        <begin position="296"/>
        <end position="314"/>
    </location>
</feature>
<feature type="compositionally biased region" description="Low complexity" evidence="2">
    <location>
        <begin position="325"/>
        <end position="336"/>
    </location>
</feature>
<feature type="compositionally biased region" description="Basic and acidic residues" evidence="2">
    <location>
        <begin position="359"/>
        <end position="371"/>
    </location>
</feature>
<feature type="compositionally biased region" description="Basic and acidic residues" evidence="2">
    <location>
        <begin position="405"/>
        <end position="428"/>
    </location>
</feature>
<feature type="compositionally biased region" description="Basic and acidic residues" evidence="2">
    <location>
        <begin position="452"/>
        <end position="468"/>
    </location>
</feature>
<feature type="compositionally biased region" description="Basic and acidic residues" evidence="2">
    <location>
        <begin position="485"/>
        <end position="495"/>
    </location>
</feature>
<feature type="compositionally biased region" description="Low complexity" evidence="2">
    <location>
        <begin position="496"/>
        <end position="508"/>
    </location>
</feature>
<feature type="compositionally biased region" description="Polar residues" evidence="2">
    <location>
        <begin position="510"/>
        <end position="521"/>
    </location>
</feature>
<feature type="compositionally biased region" description="Gly residues" evidence="2">
    <location>
        <begin position="563"/>
        <end position="572"/>
    </location>
</feature>
<feature type="compositionally biased region" description="Basic and acidic residues" evidence="2">
    <location>
        <begin position="873"/>
        <end position="884"/>
    </location>
</feature>
<feature type="compositionally biased region" description="Acidic residues" evidence="2">
    <location>
        <begin position="885"/>
        <end position="895"/>
    </location>
</feature>
<feature type="modified residue" description="Phosphoserine" evidence="3">
    <location>
        <position position="847"/>
    </location>
</feature>
<gene>
    <name evidence="4" type="primary">LHP1</name>
    <name evidence="6" type="ORF">CNAG_04570</name>
</gene>
<dbReference type="EMBL" id="CP003829">
    <property type="protein sequence ID" value="AFR97647.1"/>
    <property type="molecule type" value="Genomic_DNA"/>
</dbReference>
<dbReference type="RefSeq" id="XP_012052065.1">
    <property type="nucleotide sequence ID" value="XM_012196675.1"/>
</dbReference>
<dbReference type="SMR" id="J9VT60"/>
<dbReference type="iPTMnet" id="J9VT60"/>
<dbReference type="SwissPalm" id="J9VT60"/>
<dbReference type="GeneID" id="23887966"/>
<dbReference type="KEGG" id="cng:CNAG_04570"/>
<dbReference type="VEuPathDB" id="FungiDB:CNAG_04570"/>
<dbReference type="HOGENOM" id="CLU_324910_0_0_1"/>
<dbReference type="OrthoDB" id="9424at5206"/>
<dbReference type="Proteomes" id="UP000010091">
    <property type="component" value="Chromosome 10"/>
</dbReference>
<dbReference type="GO" id="GO:0010494">
    <property type="term" value="C:cytoplasmic stress granule"/>
    <property type="evidence" value="ECO:0007669"/>
    <property type="project" value="TreeGrafter"/>
</dbReference>
<dbReference type="GO" id="GO:0005829">
    <property type="term" value="C:cytosol"/>
    <property type="evidence" value="ECO:0007669"/>
    <property type="project" value="TreeGrafter"/>
</dbReference>
<dbReference type="GO" id="GO:0003723">
    <property type="term" value="F:RNA binding"/>
    <property type="evidence" value="ECO:0007669"/>
    <property type="project" value="UniProtKB-KW"/>
</dbReference>
<dbReference type="GO" id="GO:0045727">
    <property type="term" value="P:positive regulation of translation"/>
    <property type="evidence" value="ECO:0007669"/>
    <property type="project" value="TreeGrafter"/>
</dbReference>
<dbReference type="CDD" id="cd07323">
    <property type="entry name" value="LAM"/>
    <property type="match status" value="1"/>
</dbReference>
<dbReference type="Gene3D" id="1.10.10.10">
    <property type="entry name" value="Winged helix-like DNA-binding domain superfamily/Winged helix DNA-binding domain"/>
    <property type="match status" value="1"/>
</dbReference>
<dbReference type="InterPro" id="IPR045180">
    <property type="entry name" value="La_dom_prot"/>
</dbReference>
<dbReference type="InterPro" id="IPR006630">
    <property type="entry name" value="La_HTH"/>
</dbReference>
<dbReference type="InterPro" id="IPR036388">
    <property type="entry name" value="WH-like_DNA-bd_sf"/>
</dbReference>
<dbReference type="InterPro" id="IPR036390">
    <property type="entry name" value="WH_DNA-bd_sf"/>
</dbReference>
<dbReference type="PANTHER" id="PTHR22792:SF132">
    <property type="entry name" value="LA-RELATED PROTEIN 1"/>
    <property type="match status" value="1"/>
</dbReference>
<dbReference type="PANTHER" id="PTHR22792">
    <property type="entry name" value="LUPUS LA PROTEIN-RELATED"/>
    <property type="match status" value="1"/>
</dbReference>
<dbReference type="Pfam" id="PF05383">
    <property type="entry name" value="La"/>
    <property type="match status" value="1"/>
</dbReference>
<dbReference type="SMART" id="SM00715">
    <property type="entry name" value="LA"/>
    <property type="match status" value="1"/>
</dbReference>
<dbReference type="SUPFAM" id="SSF46785">
    <property type="entry name" value="Winged helix' DNA-binding domain"/>
    <property type="match status" value="1"/>
</dbReference>
<dbReference type="PROSITE" id="PS50961">
    <property type="entry name" value="HTH_LA"/>
    <property type="match status" value="1"/>
</dbReference>
<evidence type="ECO:0000255" key="1">
    <source>
        <dbReference type="PROSITE-ProRule" id="PRU00332"/>
    </source>
</evidence>
<evidence type="ECO:0000256" key="2">
    <source>
        <dbReference type="SAM" id="MobiDB-lite"/>
    </source>
</evidence>
<evidence type="ECO:0000269" key="3">
    <source>
    </source>
</evidence>
<evidence type="ECO:0000303" key="4">
    <source>
    </source>
</evidence>
<evidence type="ECO:0000305" key="5"/>
<evidence type="ECO:0000312" key="6">
    <source>
        <dbReference type="EMBL" id="AFR97647.1"/>
    </source>
</evidence>
<evidence type="ECO:0000312" key="7">
    <source>
        <dbReference type="Proteomes" id="UP000010091"/>
    </source>
</evidence>
<keyword id="KW-0597">Phosphoprotein</keyword>
<keyword id="KW-0694">RNA-binding</keyword>
<organism evidence="7">
    <name type="scientific">Cryptococcus neoformans var. grubii serotype A (strain H99 / ATCC 208821 / CBS 10515 / FGSC 9487)</name>
    <name type="common">Filobasidiella neoformans var. grubii</name>
    <dbReference type="NCBI Taxonomy" id="235443"/>
    <lineage>
        <taxon>Eukaryota</taxon>
        <taxon>Fungi</taxon>
        <taxon>Dikarya</taxon>
        <taxon>Basidiomycota</taxon>
        <taxon>Agaricomycotina</taxon>
        <taxon>Tremellomycetes</taxon>
        <taxon>Tremellales</taxon>
        <taxon>Cryptococcaceae</taxon>
        <taxon>Cryptococcus</taxon>
        <taxon>Cryptococcus neoformans species complex</taxon>
    </lineage>
</organism>